<reference key="1">
    <citation type="journal article" date="2004" name="Nature">
        <title>The DNA sequence and analysis of human chromosome 13.</title>
        <authorList>
            <person name="Dunham A."/>
            <person name="Matthews L.H."/>
            <person name="Burton J."/>
            <person name="Ashurst J.L."/>
            <person name="Howe K.L."/>
            <person name="Ashcroft K.J."/>
            <person name="Beare D.M."/>
            <person name="Burford D.C."/>
            <person name="Hunt S.E."/>
            <person name="Griffiths-Jones S."/>
            <person name="Jones M.C."/>
            <person name="Keenan S.J."/>
            <person name="Oliver K."/>
            <person name="Scott C.E."/>
            <person name="Ainscough R."/>
            <person name="Almeida J.P."/>
            <person name="Ambrose K.D."/>
            <person name="Andrews D.T."/>
            <person name="Ashwell R.I.S."/>
            <person name="Babbage A.K."/>
            <person name="Bagguley C.L."/>
            <person name="Bailey J."/>
            <person name="Bannerjee R."/>
            <person name="Barlow K.F."/>
            <person name="Bates K."/>
            <person name="Beasley H."/>
            <person name="Bird C.P."/>
            <person name="Bray-Allen S."/>
            <person name="Brown A.J."/>
            <person name="Brown J.Y."/>
            <person name="Burrill W."/>
            <person name="Carder C."/>
            <person name="Carter N.P."/>
            <person name="Chapman J.C."/>
            <person name="Clamp M.E."/>
            <person name="Clark S.Y."/>
            <person name="Clarke G."/>
            <person name="Clee C.M."/>
            <person name="Clegg S.C."/>
            <person name="Cobley V."/>
            <person name="Collins J.E."/>
            <person name="Corby N."/>
            <person name="Coville G.J."/>
            <person name="Deloukas P."/>
            <person name="Dhami P."/>
            <person name="Dunham I."/>
            <person name="Dunn M."/>
            <person name="Earthrowl M.E."/>
            <person name="Ellington A.G."/>
            <person name="Faulkner L."/>
            <person name="Frankish A.G."/>
            <person name="Frankland J."/>
            <person name="French L."/>
            <person name="Garner P."/>
            <person name="Garnett J."/>
            <person name="Gilbert J.G.R."/>
            <person name="Gilson C.J."/>
            <person name="Ghori J."/>
            <person name="Grafham D.V."/>
            <person name="Gribble S.M."/>
            <person name="Griffiths C."/>
            <person name="Hall R.E."/>
            <person name="Hammond S."/>
            <person name="Harley J.L."/>
            <person name="Hart E.A."/>
            <person name="Heath P.D."/>
            <person name="Howden P.J."/>
            <person name="Huckle E.J."/>
            <person name="Hunt P.J."/>
            <person name="Hunt A.R."/>
            <person name="Johnson C."/>
            <person name="Johnson D."/>
            <person name="Kay M."/>
            <person name="Kimberley A.M."/>
            <person name="King A."/>
            <person name="Laird G.K."/>
            <person name="Langford C.J."/>
            <person name="Lawlor S."/>
            <person name="Leongamornlert D.A."/>
            <person name="Lloyd D.M."/>
            <person name="Lloyd C."/>
            <person name="Loveland J.E."/>
            <person name="Lovell J."/>
            <person name="Martin S."/>
            <person name="Mashreghi-Mohammadi M."/>
            <person name="McLaren S.J."/>
            <person name="McMurray A."/>
            <person name="Milne S."/>
            <person name="Moore M.J.F."/>
            <person name="Nickerson T."/>
            <person name="Palmer S.A."/>
            <person name="Pearce A.V."/>
            <person name="Peck A.I."/>
            <person name="Pelan S."/>
            <person name="Phillimore B."/>
            <person name="Porter K.M."/>
            <person name="Rice C.M."/>
            <person name="Searle S."/>
            <person name="Sehra H.K."/>
            <person name="Shownkeen R."/>
            <person name="Skuce C.D."/>
            <person name="Smith M."/>
            <person name="Steward C.A."/>
            <person name="Sycamore N."/>
            <person name="Tester J."/>
            <person name="Thomas D.W."/>
            <person name="Tracey A."/>
            <person name="Tromans A."/>
            <person name="Tubby B."/>
            <person name="Wall M."/>
            <person name="Wallis J.M."/>
            <person name="West A.P."/>
            <person name="Whitehead S.L."/>
            <person name="Willey D.L."/>
            <person name="Wilming L."/>
            <person name="Wray P.W."/>
            <person name="Wright M.W."/>
            <person name="Young L."/>
            <person name="Coulson A."/>
            <person name="Durbin R.M."/>
            <person name="Hubbard T."/>
            <person name="Sulston J.E."/>
            <person name="Beck S."/>
            <person name="Bentley D.R."/>
            <person name="Rogers J."/>
            <person name="Ross M.T."/>
        </authorList>
    </citation>
    <scope>NUCLEOTIDE SEQUENCE [LARGE SCALE GENOMIC DNA]</scope>
</reference>
<reference key="2">
    <citation type="journal article" date="2004" name="Genome Res.">
        <title>The status, quality, and expansion of the NIH full-length cDNA project: the Mammalian Gene Collection (MGC).</title>
        <authorList>
            <consortium name="The MGC Project Team"/>
        </authorList>
    </citation>
    <scope>NUCLEOTIDE SEQUENCE [LARGE SCALE MRNA]</scope>
    <source>
        <tissue>Pancreas</tissue>
    </source>
</reference>
<keyword id="KW-0472">Membrane</keyword>
<keyword id="KW-1267">Proteomics identification</keyword>
<keyword id="KW-1185">Reference proteome</keyword>
<keyword id="KW-0812">Transmembrane</keyword>
<keyword id="KW-1133">Transmembrane helix</keyword>
<sequence length="326" mass="34609">MQPPVPGPLGLLDPAEGLSRRKKTSLWFVGSLLLVSVLIVTVGLAATTRTENVTVGGYYPGIILGFGSFLGIIGINLVENRRQMLVAAIVFISFGVVAAFCCAIVDGVFAAQHIEPRPLTTGRCQFYSSGVGYLYDVYQTEVTCHSLDGKCQLKVRSNTCYCCDLYACGSAEPSPAYYEFIGVSGCQDVLHLYRLLWASAVLNVLGLFLGIITAAVLGAFKDMVPLSQLAYGPAVPPQTLYNPAQQILAYAGFRLTPEPVPTCSSYPLPLQPCSRFPVAPSSALASSEDLQPPSPSSSGSGLPGQAPPCYAPTYFPPGEKPPPYAP</sequence>
<comment type="interaction">
    <interactant intactId="EBI-2870087">
        <id>Q8WV15</id>
    </interactant>
    <interactant intactId="EBI-638194">
        <id>P53365</id>
        <label>ARFIP2</label>
    </interactant>
    <organismsDiffer>false</organismsDiffer>
    <experiments>3</experiments>
</comment>
<comment type="interaction">
    <interactant intactId="EBI-2870087">
        <id>Q8WV15</id>
    </interactant>
    <interactant intactId="EBI-12831978">
        <id>Q6ZPD8</id>
        <label>DGAT2L6</label>
    </interactant>
    <organismsDiffer>false</organismsDiffer>
    <experiments>3</experiments>
</comment>
<comment type="interaction">
    <interactant intactId="EBI-2870087">
        <id>Q8WV15</id>
    </interactant>
    <interactant intactId="EBI-18053395">
        <id>Q7Z5P4</id>
        <label>HSD17B13</label>
    </interactant>
    <organismsDiffer>false</organismsDiffer>
    <experiments>3</experiments>
</comment>
<comment type="interaction">
    <interactant intactId="EBI-2870087">
        <id>Q8WV15</id>
    </interactant>
    <interactant intactId="EBI-2854842">
        <id>Q8WV19</id>
        <label>SFT2D1</label>
    </interactant>
    <organismsDiffer>false</organismsDiffer>
    <experiments>3</experiments>
</comment>
<comment type="interaction">
    <interactant intactId="EBI-2870087">
        <id>Q8WV15</id>
    </interactant>
    <interactant intactId="EBI-8638294">
        <id>Q9NUH8</id>
        <label>TMEM14B</label>
    </interactant>
    <organismsDiffer>false</organismsDiffer>
    <experiments>3</experiments>
</comment>
<comment type="subcellular location">
    <subcellularLocation>
        <location evidence="3">Membrane</location>
        <topology evidence="3">Multi-pass membrane protein</topology>
    </subcellularLocation>
</comment>
<comment type="similarity">
    <text evidence="3">Belongs to the TMEM255 family.</text>
</comment>
<evidence type="ECO:0000255" key="1"/>
<evidence type="ECO:0000256" key="2">
    <source>
        <dbReference type="SAM" id="MobiDB-lite"/>
    </source>
</evidence>
<evidence type="ECO:0000305" key="3"/>
<feature type="chain" id="PRO_0000266042" description="Transmembrane protein 255B">
    <location>
        <begin position="1"/>
        <end position="326"/>
    </location>
</feature>
<feature type="transmembrane region" description="Helical" evidence="1">
    <location>
        <begin position="26"/>
        <end position="46"/>
    </location>
</feature>
<feature type="transmembrane region" description="Helical" evidence="1">
    <location>
        <begin position="55"/>
        <end position="75"/>
    </location>
</feature>
<feature type="transmembrane region" description="Helical" evidence="1">
    <location>
        <begin position="85"/>
        <end position="105"/>
    </location>
</feature>
<feature type="transmembrane region" description="Helical" evidence="1">
    <location>
        <begin position="200"/>
        <end position="220"/>
    </location>
</feature>
<feature type="region of interest" description="Disordered" evidence="2">
    <location>
        <begin position="284"/>
        <end position="326"/>
    </location>
</feature>
<feature type="compositionally biased region" description="Pro residues" evidence="2">
    <location>
        <begin position="305"/>
        <end position="326"/>
    </location>
</feature>
<proteinExistence type="evidence at protein level"/>
<accession>Q8WV15</accession>
<name>T255B_HUMAN</name>
<organism>
    <name type="scientific">Homo sapiens</name>
    <name type="common">Human</name>
    <dbReference type="NCBI Taxonomy" id="9606"/>
    <lineage>
        <taxon>Eukaryota</taxon>
        <taxon>Metazoa</taxon>
        <taxon>Chordata</taxon>
        <taxon>Craniata</taxon>
        <taxon>Vertebrata</taxon>
        <taxon>Euteleostomi</taxon>
        <taxon>Mammalia</taxon>
        <taxon>Eutheria</taxon>
        <taxon>Euarchontoglires</taxon>
        <taxon>Primates</taxon>
        <taxon>Haplorrhini</taxon>
        <taxon>Catarrhini</taxon>
        <taxon>Hominidae</taxon>
        <taxon>Homo</taxon>
    </lineage>
</organism>
<protein>
    <recommendedName>
        <fullName>Transmembrane protein 255B</fullName>
    </recommendedName>
    <alternativeName>
        <fullName>Protein FAM70B</fullName>
    </alternativeName>
</protein>
<dbReference type="EMBL" id="BX072579">
    <property type="status" value="NOT_ANNOTATED_CDS"/>
    <property type="molecule type" value="Genomic_DNA"/>
</dbReference>
<dbReference type="EMBL" id="BX088578">
    <property type="status" value="NOT_ANNOTATED_CDS"/>
    <property type="molecule type" value="Genomic_DNA"/>
</dbReference>
<dbReference type="EMBL" id="BC018995">
    <property type="protein sequence ID" value="AAH18995.1"/>
    <property type="molecule type" value="mRNA"/>
</dbReference>
<dbReference type="CCDS" id="CCDS45071.1"/>
<dbReference type="RefSeq" id="NP_872420.1">
    <property type="nucleotide sequence ID" value="NM_182614.4"/>
</dbReference>
<dbReference type="BioGRID" id="131501">
    <property type="interactions" value="19"/>
</dbReference>
<dbReference type="FunCoup" id="Q8WV15">
    <property type="interactions" value="13"/>
</dbReference>
<dbReference type="IntAct" id="Q8WV15">
    <property type="interactions" value="12"/>
</dbReference>
<dbReference type="STRING" id="9606.ENSP00000364502"/>
<dbReference type="TCDB" id="9.B.200.1.2">
    <property type="family name" value="the 4 tms tmem255 or pfam fam70 (tmem255) family"/>
</dbReference>
<dbReference type="iPTMnet" id="Q8WV15"/>
<dbReference type="PhosphoSitePlus" id="Q8WV15"/>
<dbReference type="BioMuta" id="TMEM255B"/>
<dbReference type="DMDM" id="74751534"/>
<dbReference type="jPOST" id="Q8WV15"/>
<dbReference type="MassIVE" id="Q8WV15"/>
<dbReference type="PaxDb" id="9606-ENSP00000364502"/>
<dbReference type="PeptideAtlas" id="Q8WV15"/>
<dbReference type="ProteomicsDB" id="74733"/>
<dbReference type="Antibodypedia" id="48950">
    <property type="antibodies" value="37 antibodies from 12 providers"/>
</dbReference>
<dbReference type="DNASU" id="348013"/>
<dbReference type="Ensembl" id="ENST00000375353.5">
    <property type="protein sequence ID" value="ENSP00000364502.3"/>
    <property type="gene ID" value="ENSG00000184497.13"/>
</dbReference>
<dbReference type="GeneID" id="348013"/>
<dbReference type="KEGG" id="hsa:348013"/>
<dbReference type="MANE-Select" id="ENST00000375353.5">
    <property type="protein sequence ID" value="ENSP00000364502.3"/>
    <property type="RefSeq nucleotide sequence ID" value="NM_182614.4"/>
    <property type="RefSeq protein sequence ID" value="NP_872420.1"/>
</dbReference>
<dbReference type="UCSC" id="uc001vuh.4">
    <property type="organism name" value="human"/>
</dbReference>
<dbReference type="AGR" id="HGNC:28297"/>
<dbReference type="CTD" id="348013"/>
<dbReference type="DisGeNET" id="348013"/>
<dbReference type="GeneCards" id="TMEM255B"/>
<dbReference type="HGNC" id="HGNC:28297">
    <property type="gene designation" value="TMEM255B"/>
</dbReference>
<dbReference type="HPA" id="ENSG00000184497">
    <property type="expression patterns" value="Low tissue specificity"/>
</dbReference>
<dbReference type="neXtProt" id="NX_Q8WV15"/>
<dbReference type="OpenTargets" id="ENSG00000184497"/>
<dbReference type="PharmGKB" id="PA142671886"/>
<dbReference type="VEuPathDB" id="HostDB:ENSG00000184497"/>
<dbReference type="eggNOG" id="ENOG502QWXU">
    <property type="taxonomic scope" value="Eukaryota"/>
</dbReference>
<dbReference type="GeneTree" id="ENSGT00940000160889"/>
<dbReference type="HOGENOM" id="CLU_068698_1_0_1"/>
<dbReference type="InParanoid" id="Q8WV15"/>
<dbReference type="OMA" id="SHYYEFT"/>
<dbReference type="OrthoDB" id="10034004at2759"/>
<dbReference type="PAN-GO" id="Q8WV15">
    <property type="GO annotations" value="0 GO annotations based on evolutionary models"/>
</dbReference>
<dbReference type="PhylomeDB" id="Q8WV15"/>
<dbReference type="TreeFam" id="TF331034"/>
<dbReference type="PathwayCommons" id="Q8WV15"/>
<dbReference type="SignaLink" id="Q8WV15"/>
<dbReference type="BioGRID-ORCS" id="348013">
    <property type="hits" value="14 hits in 1148 CRISPR screens"/>
</dbReference>
<dbReference type="ChiTaRS" id="TMEM255B">
    <property type="organism name" value="human"/>
</dbReference>
<dbReference type="GenomeRNAi" id="348013"/>
<dbReference type="Pharos" id="Q8WV15">
    <property type="development level" value="Tdark"/>
</dbReference>
<dbReference type="PRO" id="PR:Q8WV15"/>
<dbReference type="Proteomes" id="UP000005640">
    <property type="component" value="Chromosome 13"/>
</dbReference>
<dbReference type="RNAct" id="Q8WV15">
    <property type="molecule type" value="protein"/>
</dbReference>
<dbReference type="Bgee" id="ENSG00000184497">
    <property type="expression patterns" value="Expressed in omental fat pad and 120 other cell types or tissues"/>
</dbReference>
<dbReference type="ExpressionAtlas" id="Q8WV15">
    <property type="expression patterns" value="baseline and differential"/>
</dbReference>
<dbReference type="GO" id="GO:0016020">
    <property type="term" value="C:membrane"/>
    <property type="evidence" value="ECO:0007669"/>
    <property type="project" value="UniProtKB-SubCell"/>
</dbReference>
<dbReference type="InterPro" id="IPR028014">
    <property type="entry name" value="TMEM255"/>
</dbReference>
<dbReference type="PANTHER" id="PTHR33721:SF3">
    <property type="entry name" value="TRANSMEMBRANE PROTEIN 255B"/>
    <property type="match status" value="1"/>
</dbReference>
<dbReference type="PANTHER" id="PTHR33721">
    <property type="entry name" value="TRANSMEMBRANE PROTEIN 255B-LIKE"/>
    <property type="match status" value="1"/>
</dbReference>
<dbReference type="Pfam" id="PF14967">
    <property type="entry name" value="FAM70"/>
    <property type="match status" value="1"/>
</dbReference>
<gene>
    <name type="primary">TMEM255B</name>
    <name type="synonym">FAM70B</name>
</gene>